<protein>
    <recommendedName>
        <fullName evidence="1">Phosphoglycerate kinase</fullName>
        <ecNumber evidence="1">2.7.2.3</ecNumber>
    </recommendedName>
</protein>
<feature type="chain" id="PRO_1000076596" description="Phosphoglycerate kinase">
    <location>
        <begin position="1"/>
        <end position="393"/>
    </location>
</feature>
<feature type="binding site" evidence="1">
    <location>
        <begin position="21"/>
        <end position="23"/>
    </location>
    <ligand>
        <name>substrate</name>
    </ligand>
</feature>
<feature type="binding site" evidence="1">
    <location>
        <begin position="59"/>
        <end position="62"/>
    </location>
    <ligand>
        <name>substrate</name>
    </ligand>
</feature>
<feature type="binding site" evidence="1">
    <location>
        <position position="118"/>
    </location>
    <ligand>
        <name>substrate</name>
    </ligand>
</feature>
<feature type="binding site" evidence="1">
    <location>
        <position position="151"/>
    </location>
    <ligand>
        <name>substrate</name>
    </ligand>
</feature>
<feature type="binding site" evidence="1">
    <location>
        <position position="201"/>
    </location>
    <ligand>
        <name>ATP</name>
        <dbReference type="ChEBI" id="CHEBI:30616"/>
    </ligand>
</feature>
<feature type="binding site" evidence="1">
    <location>
        <position position="323"/>
    </location>
    <ligand>
        <name>ATP</name>
        <dbReference type="ChEBI" id="CHEBI:30616"/>
    </ligand>
</feature>
<feature type="binding site" evidence="1">
    <location>
        <begin position="349"/>
        <end position="352"/>
    </location>
    <ligand>
        <name>ATP</name>
        <dbReference type="ChEBI" id="CHEBI:30616"/>
    </ligand>
</feature>
<accession>A5CYN8</accession>
<reference key="1">
    <citation type="journal article" date="2008" name="Genome Res.">
        <title>The genome of Pelotomaculum thermopropionicum reveals niche-associated evolution in anaerobic microbiota.</title>
        <authorList>
            <person name="Kosaka T."/>
            <person name="Kato S."/>
            <person name="Shimoyama T."/>
            <person name="Ishii S."/>
            <person name="Abe T."/>
            <person name="Watanabe K."/>
        </authorList>
    </citation>
    <scope>NUCLEOTIDE SEQUENCE [LARGE SCALE GENOMIC DNA]</scope>
    <source>
        <strain>DSM 13744 / JCM 10971 / SI</strain>
    </source>
</reference>
<keyword id="KW-0067">ATP-binding</keyword>
<keyword id="KW-0963">Cytoplasm</keyword>
<keyword id="KW-0324">Glycolysis</keyword>
<keyword id="KW-0418">Kinase</keyword>
<keyword id="KW-0547">Nucleotide-binding</keyword>
<keyword id="KW-1185">Reference proteome</keyword>
<keyword id="KW-0808">Transferase</keyword>
<proteinExistence type="inferred from homology"/>
<gene>
    <name evidence="1" type="primary">pgk</name>
    <name type="ordered locus">PTH_2722</name>
</gene>
<name>PGK_PELTS</name>
<dbReference type="EC" id="2.7.2.3" evidence="1"/>
<dbReference type="EMBL" id="AP009389">
    <property type="protein sequence ID" value="BAF60903.1"/>
    <property type="molecule type" value="Genomic_DNA"/>
</dbReference>
<dbReference type="SMR" id="A5CYN8"/>
<dbReference type="STRING" id="370438.PTH_2722"/>
<dbReference type="KEGG" id="pth:PTH_2722"/>
<dbReference type="eggNOG" id="COG0126">
    <property type="taxonomic scope" value="Bacteria"/>
</dbReference>
<dbReference type="HOGENOM" id="CLU_025427_0_2_9"/>
<dbReference type="UniPathway" id="UPA00109">
    <property type="reaction ID" value="UER00185"/>
</dbReference>
<dbReference type="Proteomes" id="UP000006556">
    <property type="component" value="Chromosome"/>
</dbReference>
<dbReference type="GO" id="GO:0005829">
    <property type="term" value="C:cytosol"/>
    <property type="evidence" value="ECO:0007669"/>
    <property type="project" value="TreeGrafter"/>
</dbReference>
<dbReference type="GO" id="GO:0043531">
    <property type="term" value="F:ADP binding"/>
    <property type="evidence" value="ECO:0007669"/>
    <property type="project" value="TreeGrafter"/>
</dbReference>
<dbReference type="GO" id="GO:0005524">
    <property type="term" value="F:ATP binding"/>
    <property type="evidence" value="ECO:0007669"/>
    <property type="project" value="UniProtKB-KW"/>
</dbReference>
<dbReference type="GO" id="GO:0004618">
    <property type="term" value="F:phosphoglycerate kinase activity"/>
    <property type="evidence" value="ECO:0007669"/>
    <property type="project" value="UniProtKB-UniRule"/>
</dbReference>
<dbReference type="GO" id="GO:0006094">
    <property type="term" value="P:gluconeogenesis"/>
    <property type="evidence" value="ECO:0007669"/>
    <property type="project" value="TreeGrafter"/>
</dbReference>
<dbReference type="GO" id="GO:0006096">
    <property type="term" value="P:glycolytic process"/>
    <property type="evidence" value="ECO:0007669"/>
    <property type="project" value="UniProtKB-UniRule"/>
</dbReference>
<dbReference type="CDD" id="cd00318">
    <property type="entry name" value="Phosphoglycerate_kinase"/>
    <property type="match status" value="1"/>
</dbReference>
<dbReference type="FunFam" id="3.40.50.1260:FF:000002">
    <property type="entry name" value="Phosphoglycerate kinase"/>
    <property type="match status" value="1"/>
</dbReference>
<dbReference type="FunFam" id="3.40.50.1260:FF:000007">
    <property type="entry name" value="Phosphoglycerate kinase"/>
    <property type="match status" value="1"/>
</dbReference>
<dbReference type="Gene3D" id="3.40.50.1260">
    <property type="entry name" value="Phosphoglycerate kinase, N-terminal domain"/>
    <property type="match status" value="2"/>
</dbReference>
<dbReference type="HAMAP" id="MF_00145">
    <property type="entry name" value="Phosphoglyc_kinase"/>
    <property type="match status" value="1"/>
</dbReference>
<dbReference type="InterPro" id="IPR001576">
    <property type="entry name" value="Phosphoglycerate_kinase"/>
</dbReference>
<dbReference type="InterPro" id="IPR015911">
    <property type="entry name" value="Phosphoglycerate_kinase_CS"/>
</dbReference>
<dbReference type="InterPro" id="IPR015824">
    <property type="entry name" value="Phosphoglycerate_kinase_N"/>
</dbReference>
<dbReference type="InterPro" id="IPR036043">
    <property type="entry name" value="Phosphoglycerate_kinase_sf"/>
</dbReference>
<dbReference type="PANTHER" id="PTHR11406">
    <property type="entry name" value="PHOSPHOGLYCERATE KINASE"/>
    <property type="match status" value="1"/>
</dbReference>
<dbReference type="PANTHER" id="PTHR11406:SF23">
    <property type="entry name" value="PHOSPHOGLYCERATE KINASE 1, CHLOROPLASTIC-RELATED"/>
    <property type="match status" value="1"/>
</dbReference>
<dbReference type="Pfam" id="PF00162">
    <property type="entry name" value="PGK"/>
    <property type="match status" value="1"/>
</dbReference>
<dbReference type="PIRSF" id="PIRSF000724">
    <property type="entry name" value="Pgk"/>
    <property type="match status" value="1"/>
</dbReference>
<dbReference type="PRINTS" id="PR00477">
    <property type="entry name" value="PHGLYCKINASE"/>
</dbReference>
<dbReference type="SUPFAM" id="SSF53748">
    <property type="entry name" value="Phosphoglycerate kinase"/>
    <property type="match status" value="1"/>
</dbReference>
<dbReference type="PROSITE" id="PS00111">
    <property type="entry name" value="PGLYCERATE_KINASE"/>
    <property type="match status" value="1"/>
</dbReference>
<comment type="catalytic activity">
    <reaction evidence="1">
        <text>(2R)-3-phosphoglycerate + ATP = (2R)-3-phospho-glyceroyl phosphate + ADP</text>
        <dbReference type="Rhea" id="RHEA:14801"/>
        <dbReference type="ChEBI" id="CHEBI:30616"/>
        <dbReference type="ChEBI" id="CHEBI:57604"/>
        <dbReference type="ChEBI" id="CHEBI:58272"/>
        <dbReference type="ChEBI" id="CHEBI:456216"/>
        <dbReference type="EC" id="2.7.2.3"/>
    </reaction>
</comment>
<comment type="pathway">
    <text evidence="1">Carbohydrate degradation; glycolysis; pyruvate from D-glyceraldehyde 3-phosphate: step 2/5.</text>
</comment>
<comment type="subunit">
    <text evidence="1">Monomer.</text>
</comment>
<comment type="subcellular location">
    <subcellularLocation>
        <location evidence="1">Cytoplasm</location>
    </subcellularLocation>
</comment>
<comment type="similarity">
    <text evidence="1">Belongs to the phosphoglycerate kinase family.</text>
</comment>
<evidence type="ECO:0000255" key="1">
    <source>
        <dbReference type="HAMAP-Rule" id="MF_00145"/>
    </source>
</evidence>
<sequence length="393" mass="42064">MAKKTVRDIDVKGKRVLLRVDFNVPMENGRVADDVKIKEAVPTINYLIGQKARVILVSHLGRPKGRVDERYKMDPVARRLSELLGKTVVKAGDCVGEAARSAVAQMQDGDVVLLENVRFHPEEEKNDEKFARQLAELADVFVNDAFGTAHRAHASTEGVAGFLPAVAGLLMEKELEILGRLLTSPERPFAAVVGGSKVSDKLGVIFNLLTKVDTVIIGGGMANTFLKAQGYSVGKSLLEADKIDLARKLIAEARSREVKLLLPVDVVVAPGPAPGQEQRTVPVDQIPAEWMALDIGPESIRLFTEALRAARTVVWNGPMGVFEMDPFARGTEAIARTLAELNAVTVIGGGDTAAAAKKAGVAGKMTHISTGGGASLEFLEGKQLPGVRALLDK</sequence>
<organism>
    <name type="scientific">Pelotomaculum thermopropionicum (strain DSM 13744 / JCM 10971 / SI)</name>
    <dbReference type="NCBI Taxonomy" id="370438"/>
    <lineage>
        <taxon>Bacteria</taxon>
        <taxon>Bacillati</taxon>
        <taxon>Bacillota</taxon>
        <taxon>Clostridia</taxon>
        <taxon>Eubacteriales</taxon>
        <taxon>Desulfotomaculaceae</taxon>
        <taxon>Pelotomaculum</taxon>
    </lineage>
</organism>